<name>ABCCD_DICDI</name>
<protein>
    <recommendedName>
        <fullName>ABC transporter C family member 13</fullName>
    </recommendedName>
    <alternativeName>
        <fullName>ABC transporter ABCC.13</fullName>
    </alternativeName>
</protein>
<accession>Q54V86</accession>
<accession>Q8T6G7</accession>
<organism>
    <name type="scientific">Dictyostelium discoideum</name>
    <name type="common">Social amoeba</name>
    <dbReference type="NCBI Taxonomy" id="44689"/>
    <lineage>
        <taxon>Eukaryota</taxon>
        <taxon>Amoebozoa</taxon>
        <taxon>Evosea</taxon>
        <taxon>Eumycetozoa</taxon>
        <taxon>Dictyostelia</taxon>
        <taxon>Dictyosteliales</taxon>
        <taxon>Dictyosteliaceae</taxon>
        <taxon>Dictyostelium</taxon>
    </lineage>
</organism>
<evidence type="ECO:0000255" key="1">
    <source>
        <dbReference type="PROSITE-ProRule" id="PRU00434"/>
    </source>
</evidence>
<evidence type="ECO:0000255" key="2">
    <source>
        <dbReference type="PROSITE-ProRule" id="PRU00441"/>
    </source>
</evidence>
<evidence type="ECO:0000256" key="3">
    <source>
        <dbReference type="SAM" id="MobiDB-lite"/>
    </source>
</evidence>
<evidence type="ECO:0000305" key="4"/>
<sequence>MFERINKIKKKIKEKLSYSILKDEKIDYYNLPCPEESASFLSKLTFSWTQRMLMTGYFRGPIQMSDICDLPDDVKVQKTNPILDDIDFGNSKWPLLKFIYTNFVTKNKKSIFIVILCAIFSILSPLCLKYFIKYIQLSKNEKTFLTGLGYCVLLFVGTFSYTLSQQFLYWFGMRTSLHVRGALSQRIYEKMLKLSSSGGKKYSSGSIMNLISTDIGLFADFFWIGHLEIIIFPIQITALLALLCWIVGWSGLVGFGVMIISLPINTFFGSKMSKNLMLSLGYSDTRCNLTSEFINGIRFLKLYAWEKLFLDRIEEQRRLQLKYLYRRVIFAIFEKMLSQTTNAVVLVSTFSVYSINNEIELSVAFTAITIFVNLRQPIMRLPEAIHNLLGLIPSAKRVESFLQLSEIQTQPFINFNNKSINDDILIDNGTFNWNQDNDDYITNNGDNNNNNNKNEIKKRLIEKSEEEYETTTTTTDDNNNNNYESYLLNNINFKAPAGKLTIICGVVGSGKTSLVSGLIGEIYKVSGRVNTPNKISFTTQQSFLLSTSLRENILFGNEMNLERYKKVIEACCLAPDLLQLAAKDLTEIGERGINLSGGQKQRISLARALYANSDCYILDEPLSAVDPEVATHLFNHCIQGMMNDKTRILVTHQLQFIPSADHIVVVDNGKLVQGTYSELKSKGIDFESIMKTKKLNIDNQQQQQQQQQHDENEIIDENPMKKSNSLIESNKLINIDEIISDKHDSNLIEKAKLLVKEDKSEGAIGLHVYREYFKHGSSTFFFIATCVVYFFSQAIFQMTDFWLSTWSQHKLQGKSDSFYIFYYIIFIGLFIVTLVIRYFMLAHVTFSASKNLHTSLLNSVGFASCQFFDTNPSGRILNRFSKDIAEIDLLLYDLFSDVLYCGSTVVFAICVMIYISPLISLPFLVLIIVYNIIKNIYAVSSRDLKRYESITRSPIFSLLQETFNGLVTIRSYQQQNRFISMMQDHININLRLFYYSFSIHRWIGVRLEFISALVVFLTAFFSLFNSNAGFSVLSVTTAIGMCTYLNWAVRQFVELEVKMNSVERIESYINTPKEGNRFTIDNEEEGEENMINLNEKWPSKGEIEFRDVEIRYRPTSEPSLKNLSFKINSNDHIGIVGRTGAGKSTVGISLFRMVECSKGSILIDGIDISKIGLHDLRSSLGIVPQDPFIFSGTIRLNIDPFNKYTDSEIWVALEKVKLKSTISSMPLKLETMIEEGGDGLSFGQKQLLCLSRTILKNSKVVLMDEATSGIDYVTGDLIKQTLLENFNDCTMLTIAHRLDTIIDSTKIAVVDKGELIEYDTPINLINTKNSKFSKLVKYQTDFHKENEKNF</sequence>
<gene>
    <name type="primary">abcC13</name>
    <name type="ORF">DDB_G0280539</name>
</gene>
<dbReference type="EMBL" id="AAFI02000037">
    <property type="protein sequence ID" value="EAL67071.1"/>
    <property type="molecule type" value="Genomic_DNA"/>
</dbReference>
<dbReference type="EMBL" id="AF474345">
    <property type="protein sequence ID" value="AAL85716.1"/>
    <property type="molecule type" value="Genomic_DNA"/>
</dbReference>
<dbReference type="RefSeq" id="XP_641045.1">
    <property type="nucleotide sequence ID" value="XM_635953.1"/>
</dbReference>
<dbReference type="SMR" id="Q54V86"/>
<dbReference type="FunCoup" id="Q54V86">
    <property type="interactions" value="19"/>
</dbReference>
<dbReference type="STRING" id="44689.Q54V86"/>
<dbReference type="PaxDb" id="44689-DDB0215342"/>
<dbReference type="EnsemblProtists" id="EAL67071">
    <property type="protein sequence ID" value="EAL67071"/>
    <property type="gene ID" value="DDB_G0280539"/>
</dbReference>
<dbReference type="GeneID" id="8622603"/>
<dbReference type="KEGG" id="ddi:DDB_G0280539"/>
<dbReference type="dictyBase" id="DDB_G0280539">
    <property type="gene designation" value="abcC13"/>
</dbReference>
<dbReference type="VEuPathDB" id="AmoebaDB:DDB_G0280539"/>
<dbReference type="eggNOG" id="KOG0054">
    <property type="taxonomic scope" value="Eukaryota"/>
</dbReference>
<dbReference type="HOGENOM" id="CLU_000604_27_1_1"/>
<dbReference type="InParanoid" id="Q54V86"/>
<dbReference type="OMA" id="MEMGSPQ"/>
<dbReference type="PhylomeDB" id="Q54V86"/>
<dbReference type="Reactome" id="R-DDI-114608">
    <property type="pathway name" value="Platelet degranulation"/>
</dbReference>
<dbReference type="Reactome" id="R-DDI-382556">
    <property type="pathway name" value="ABC-family proteins mediated transport"/>
</dbReference>
<dbReference type="Reactome" id="R-DDI-8856825">
    <property type="pathway name" value="Cargo recognition for clathrin-mediated endocytosis"/>
</dbReference>
<dbReference type="Reactome" id="R-DDI-8856828">
    <property type="pathway name" value="Clathrin-mediated endocytosis"/>
</dbReference>
<dbReference type="Reactome" id="R-DDI-9646399">
    <property type="pathway name" value="Aggrephagy"/>
</dbReference>
<dbReference type="Reactome" id="R-DDI-9748787">
    <property type="pathway name" value="Azathioprine ADME"/>
</dbReference>
<dbReference type="Reactome" id="R-DDI-9753281">
    <property type="pathway name" value="Paracetamol ADME"/>
</dbReference>
<dbReference type="PRO" id="PR:Q54V86"/>
<dbReference type="Proteomes" id="UP000002195">
    <property type="component" value="Chromosome 3"/>
</dbReference>
<dbReference type="GO" id="GO:0016020">
    <property type="term" value="C:membrane"/>
    <property type="evidence" value="ECO:0000318"/>
    <property type="project" value="GO_Central"/>
</dbReference>
<dbReference type="GO" id="GO:0140359">
    <property type="term" value="F:ABC-type transporter activity"/>
    <property type="evidence" value="ECO:0007669"/>
    <property type="project" value="InterPro"/>
</dbReference>
<dbReference type="GO" id="GO:0005524">
    <property type="term" value="F:ATP binding"/>
    <property type="evidence" value="ECO:0007669"/>
    <property type="project" value="UniProtKB-KW"/>
</dbReference>
<dbReference type="GO" id="GO:0016887">
    <property type="term" value="F:ATP hydrolysis activity"/>
    <property type="evidence" value="ECO:0007669"/>
    <property type="project" value="InterPro"/>
</dbReference>
<dbReference type="GO" id="GO:0042626">
    <property type="term" value="F:ATPase-coupled transmembrane transporter activity"/>
    <property type="evidence" value="ECO:0000318"/>
    <property type="project" value="GO_Central"/>
</dbReference>
<dbReference type="GO" id="GO:0031154">
    <property type="term" value="P:culmination involved in sorocarp development"/>
    <property type="evidence" value="ECO:0000315"/>
    <property type="project" value="dictyBase"/>
</dbReference>
<dbReference type="GO" id="GO:0031288">
    <property type="term" value="P:sorocarp morphogenesis"/>
    <property type="evidence" value="ECO:0000315"/>
    <property type="project" value="dictyBase"/>
</dbReference>
<dbReference type="GO" id="GO:0055085">
    <property type="term" value="P:transmembrane transport"/>
    <property type="evidence" value="ECO:0000318"/>
    <property type="project" value="GO_Central"/>
</dbReference>
<dbReference type="CDD" id="cd18579">
    <property type="entry name" value="ABC_6TM_ABCC_D1"/>
    <property type="match status" value="1"/>
</dbReference>
<dbReference type="CDD" id="cd18580">
    <property type="entry name" value="ABC_6TM_ABCC_D2"/>
    <property type="match status" value="1"/>
</dbReference>
<dbReference type="CDD" id="cd03250">
    <property type="entry name" value="ABCC_MRP_domain1"/>
    <property type="match status" value="1"/>
</dbReference>
<dbReference type="CDD" id="cd03244">
    <property type="entry name" value="ABCC_MRP_domain2"/>
    <property type="match status" value="1"/>
</dbReference>
<dbReference type="FunFam" id="1.20.1560.10:FF:000080">
    <property type="entry name" value="ABC transporter C family member 1"/>
    <property type="match status" value="1"/>
</dbReference>
<dbReference type="FunFam" id="3.40.50.300:FF:002822">
    <property type="entry name" value="ABC transporter C family member 7"/>
    <property type="match status" value="1"/>
</dbReference>
<dbReference type="FunFam" id="1.20.1560.10:FF:000010">
    <property type="entry name" value="Multidrug resistance-associated ABC transporter"/>
    <property type="match status" value="1"/>
</dbReference>
<dbReference type="FunFam" id="3.40.50.300:FF:000610">
    <property type="entry name" value="Multidrug resistance-associated ABC transporter"/>
    <property type="match status" value="1"/>
</dbReference>
<dbReference type="Gene3D" id="1.20.1560.10">
    <property type="entry name" value="ABC transporter type 1, transmembrane domain"/>
    <property type="match status" value="2"/>
</dbReference>
<dbReference type="Gene3D" id="3.40.50.300">
    <property type="entry name" value="P-loop containing nucleotide triphosphate hydrolases"/>
    <property type="match status" value="2"/>
</dbReference>
<dbReference type="InterPro" id="IPR003593">
    <property type="entry name" value="AAA+_ATPase"/>
</dbReference>
<dbReference type="InterPro" id="IPR011527">
    <property type="entry name" value="ABC1_TM_dom"/>
</dbReference>
<dbReference type="InterPro" id="IPR036640">
    <property type="entry name" value="ABC1_TM_sf"/>
</dbReference>
<dbReference type="InterPro" id="IPR003439">
    <property type="entry name" value="ABC_transporter-like_ATP-bd"/>
</dbReference>
<dbReference type="InterPro" id="IPR017871">
    <property type="entry name" value="ABC_transporter-like_CS"/>
</dbReference>
<dbReference type="InterPro" id="IPR050173">
    <property type="entry name" value="ABC_transporter_C-like"/>
</dbReference>
<dbReference type="InterPro" id="IPR044746">
    <property type="entry name" value="ABCC_6TM_D1"/>
</dbReference>
<dbReference type="InterPro" id="IPR044726">
    <property type="entry name" value="ABCC_6TM_D2"/>
</dbReference>
<dbReference type="InterPro" id="IPR027417">
    <property type="entry name" value="P-loop_NTPase"/>
</dbReference>
<dbReference type="PANTHER" id="PTHR24223:SF172">
    <property type="entry name" value="ABC TRANSPORTER C FAMILY MEMBER 1-RELATED"/>
    <property type="match status" value="1"/>
</dbReference>
<dbReference type="PANTHER" id="PTHR24223">
    <property type="entry name" value="ATP-BINDING CASSETTE SUB-FAMILY C"/>
    <property type="match status" value="1"/>
</dbReference>
<dbReference type="Pfam" id="PF00664">
    <property type="entry name" value="ABC_membrane"/>
    <property type="match status" value="2"/>
</dbReference>
<dbReference type="Pfam" id="PF00005">
    <property type="entry name" value="ABC_tran"/>
    <property type="match status" value="2"/>
</dbReference>
<dbReference type="SMART" id="SM00382">
    <property type="entry name" value="AAA"/>
    <property type="match status" value="2"/>
</dbReference>
<dbReference type="SUPFAM" id="SSF90123">
    <property type="entry name" value="ABC transporter transmembrane region"/>
    <property type="match status" value="2"/>
</dbReference>
<dbReference type="SUPFAM" id="SSF52540">
    <property type="entry name" value="P-loop containing nucleoside triphosphate hydrolases"/>
    <property type="match status" value="2"/>
</dbReference>
<dbReference type="PROSITE" id="PS50929">
    <property type="entry name" value="ABC_TM1F"/>
    <property type="match status" value="2"/>
</dbReference>
<dbReference type="PROSITE" id="PS00211">
    <property type="entry name" value="ABC_TRANSPORTER_1"/>
    <property type="match status" value="2"/>
</dbReference>
<dbReference type="PROSITE" id="PS50893">
    <property type="entry name" value="ABC_TRANSPORTER_2"/>
    <property type="match status" value="2"/>
</dbReference>
<comment type="subcellular location">
    <subcellularLocation>
        <location evidence="2">Membrane</location>
        <topology evidence="2">Multi-pass membrane protein</topology>
    </subcellularLocation>
</comment>
<comment type="similarity">
    <text evidence="4">Belongs to the ABC transporter superfamily. ABCC family. Conjugate transporter (TC 3.A.1.208) subfamily.</text>
</comment>
<proteinExistence type="inferred from homology"/>
<feature type="chain" id="PRO_0000363857" description="ABC transporter C family member 13">
    <location>
        <begin position="1"/>
        <end position="1350"/>
    </location>
</feature>
<feature type="transmembrane region" description="Helical" evidence="2">
    <location>
        <begin position="111"/>
        <end position="131"/>
    </location>
</feature>
<feature type="transmembrane region" description="Helical" evidence="2">
    <location>
        <begin position="143"/>
        <end position="163"/>
    </location>
</feature>
<feature type="transmembrane region" description="Helical" evidence="2">
    <location>
        <begin position="215"/>
        <end position="235"/>
    </location>
</feature>
<feature type="transmembrane region" description="Helical" evidence="2">
    <location>
        <begin position="240"/>
        <end position="260"/>
    </location>
</feature>
<feature type="transmembrane region" description="Helical" evidence="2">
    <location>
        <begin position="776"/>
        <end position="796"/>
    </location>
</feature>
<feature type="transmembrane region" description="Helical" evidence="2">
    <location>
        <begin position="816"/>
        <end position="836"/>
    </location>
</feature>
<feature type="transmembrane region" description="Helical" evidence="2">
    <location>
        <begin position="887"/>
        <end position="907"/>
    </location>
</feature>
<feature type="transmembrane region" description="Helical" evidence="2">
    <location>
        <begin position="909"/>
        <end position="929"/>
    </location>
</feature>
<feature type="transmembrane region" description="Helical" evidence="2">
    <location>
        <begin position="1003"/>
        <end position="1023"/>
    </location>
</feature>
<feature type="transmembrane region" description="Helical" evidence="2">
    <location>
        <begin position="1029"/>
        <end position="1049"/>
    </location>
</feature>
<feature type="domain" description="ABC transmembrane type-1 1" evidence="2">
    <location>
        <begin position="107"/>
        <end position="390"/>
    </location>
</feature>
<feature type="domain" description="ABC transporter 1" evidence="1">
    <location>
        <begin position="473"/>
        <end position="693"/>
    </location>
</feature>
<feature type="domain" description="ABC transmembrane type-1 2" evidence="2">
    <location>
        <begin position="774"/>
        <end position="1061"/>
    </location>
</feature>
<feature type="domain" description="ABC transporter 2" evidence="1">
    <location>
        <begin position="1103"/>
        <end position="1337"/>
    </location>
</feature>
<feature type="region of interest" description="Disordered" evidence="3">
    <location>
        <begin position="462"/>
        <end position="481"/>
    </location>
</feature>
<feature type="compositionally biased region" description="Low complexity" evidence="3">
    <location>
        <begin position="470"/>
        <end position="481"/>
    </location>
</feature>
<feature type="binding site" evidence="1">
    <location>
        <begin position="505"/>
        <end position="512"/>
    </location>
    <ligand>
        <name>ATP</name>
        <dbReference type="ChEBI" id="CHEBI:30616"/>
    </ligand>
</feature>
<feature type="binding site" evidence="1">
    <location>
        <begin position="1137"/>
        <end position="1144"/>
    </location>
    <ligand>
        <name>ATP</name>
        <dbReference type="ChEBI" id="CHEBI:30616"/>
    </ligand>
</feature>
<feature type="sequence conflict" description="In Ref. 2; AAL85716." evidence="4" ref="2">
    <original>Q</original>
    <variation>H</variation>
    <location>
        <position position="704"/>
    </location>
</feature>
<keyword id="KW-0067">ATP-binding</keyword>
<keyword id="KW-0472">Membrane</keyword>
<keyword id="KW-0547">Nucleotide-binding</keyword>
<keyword id="KW-1185">Reference proteome</keyword>
<keyword id="KW-0677">Repeat</keyword>
<keyword id="KW-0812">Transmembrane</keyword>
<keyword id="KW-1133">Transmembrane helix</keyword>
<keyword id="KW-0813">Transport</keyword>
<reference key="1">
    <citation type="journal article" date="2005" name="Nature">
        <title>The genome of the social amoeba Dictyostelium discoideum.</title>
        <authorList>
            <person name="Eichinger L."/>
            <person name="Pachebat J.A."/>
            <person name="Gloeckner G."/>
            <person name="Rajandream M.A."/>
            <person name="Sucgang R."/>
            <person name="Berriman M."/>
            <person name="Song J."/>
            <person name="Olsen R."/>
            <person name="Szafranski K."/>
            <person name="Xu Q."/>
            <person name="Tunggal B."/>
            <person name="Kummerfeld S."/>
            <person name="Madera M."/>
            <person name="Konfortov B.A."/>
            <person name="Rivero F."/>
            <person name="Bankier A.T."/>
            <person name="Lehmann R."/>
            <person name="Hamlin N."/>
            <person name="Davies R."/>
            <person name="Gaudet P."/>
            <person name="Fey P."/>
            <person name="Pilcher K."/>
            <person name="Chen G."/>
            <person name="Saunders D."/>
            <person name="Sodergren E.J."/>
            <person name="Davis P."/>
            <person name="Kerhornou A."/>
            <person name="Nie X."/>
            <person name="Hall N."/>
            <person name="Anjard C."/>
            <person name="Hemphill L."/>
            <person name="Bason N."/>
            <person name="Farbrother P."/>
            <person name="Desany B."/>
            <person name="Just E."/>
            <person name="Morio T."/>
            <person name="Rost R."/>
            <person name="Churcher C.M."/>
            <person name="Cooper J."/>
            <person name="Haydock S."/>
            <person name="van Driessche N."/>
            <person name="Cronin A."/>
            <person name="Goodhead I."/>
            <person name="Muzny D.M."/>
            <person name="Mourier T."/>
            <person name="Pain A."/>
            <person name="Lu M."/>
            <person name="Harper D."/>
            <person name="Lindsay R."/>
            <person name="Hauser H."/>
            <person name="James K.D."/>
            <person name="Quiles M."/>
            <person name="Madan Babu M."/>
            <person name="Saito T."/>
            <person name="Buchrieser C."/>
            <person name="Wardroper A."/>
            <person name="Felder M."/>
            <person name="Thangavelu M."/>
            <person name="Johnson D."/>
            <person name="Knights A."/>
            <person name="Loulseged H."/>
            <person name="Mungall K.L."/>
            <person name="Oliver K."/>
            <person name="Price C."/>
            <person name="Quail M.A."/>
            <person name="Urushihara H."/>
            <person name="Hernandez J."/>
            <person name="Rabbinowitsch E."/>
            <person name="Steffen D."/>
            <person name="Sanders M."/>
            <person name="Ma J."/>
            <person name="Kohara Y."/>
            <person name="Sharp S."/>
            <person name="Simmonds M.N."/>
            <person name="Spiegler S."/>
            <person name="Tivey A."/>
            <person name="Sugano S."/>
            <person name="White B."/>
            <person name="Walker D."/>
            <person name="Woodward J.R."/>
            <person name="Winckler T."/>
            <person name="Tanaka Y."/>
            <person name="Shaulsky G."/>
            <person name="Schleicher M."/>
            <person name="Weinstock G.M."/>
            <person name="Rosenthal A."/>
            <person name="Cox E.C."/>
            <person name="Chisholm R.L."/>
            <person name="Gibbs R.A."/>
            <person name="Loomis W.F."/>
            <person name="Platzer M."/>
            <person name="Kay R.R."/>
            <person name="Williams J.G."/>
            <person name="Dear P.H."/>
            <person name="Noegel A.A."/>
            <person name="Barrell B.G."/>
            <person name="Kuspa A."/>
        </authorList>
    </citation>
    <scope>NUCLEOTIDE SEQUENCE [LARGE SCALE GENOMIC DNA]</scope>
    <source>
        <strain>AX4</strain>
    </source>
</reference>
<reference key="2">
    <citation type="journal article" date="2002" name="Eukaryot. Cell">
        <title>Evolutionary analyses of ABC transporters of Dictyostelium discoideum.</title>
        <authorList>
            <person name="Anjard C."/>
            <person name="Loomis W.F."/>
        </authorList>
    </citation>
    <scope>NUCLEOTIDE SEQUENCE [GENOMIC DNA] OF 682-1350</scope>
    <scope>NOMENCLATURE</scope>
    <source>
        <strain>AX4</strain>
    </source>
</reference>